<gene>
    <name evidence="18 20" type="primary">STX17</name>
</gene>
<dbReference type="EMBL" id="AK000658">
    <property type="protein sequence ID" value="BAA91311.1"/>
    <property type="molecule type" value="mRNA"/>
</dbReference>
<dbReference type="EMBL" id="AL358937">
    <property type="status" value="NOT_ANNOTATED_CDS"/>
    <property type="molecule type" value="Genomic_DNA"/>
</dbReference>
<dbReference type="EMBL" id="CH471105">
    <property type="protein sequence ID" value="EAW58920.1"/>
    <property type="molecule type" value="Genomic_DNA"/>
</dbReference>
<dbReference type="EMBL" id="BC101564">
    <property type="protein sequence ID" value="AAI01565.1"/>
    <property type="molecule type" value="mRNA"/>
</dbReference>
<dbReference type="EMBL" id="BC101566">
    <property type="protein sequence ID" value="AAI01567.1"/>
    <property type="molecule type" value="mRNA"/>
</dbReference>
<dbReference type="CCDS" id="CCDS6745.1"/>
<dbReference type="RefSeq" id="NP_060389.2">
    <property type="nucleotide sequence ID" value="NM_017919.3"/>
</dbReference>
<dbReference type="RefSeq" id="XP_011517122.1">
    <property type="nucleotide sequence ID" value="XM_011518820.4"/>
</dbReference>
<dbReference type="RefSeq" id="XP_011517123.1">
    <property type="nucleotide sequence ID" value="XM_011518821.4"/>
</dbReference>
<dbReference type="RefSeq" id="XP_047279507.1">
    <property type="nucleotide sequence ID" value="XM_047423551.1"/>
</dbReference>
<dbReference type="RefSeq" id="XP_054219174.1">
    <property type="nucleotide sequence ID" value="XM_054363199.1"/>
</dbReference>
<dbReference type="RefSeq" id="XP_054219175.1">
    <property type="nucleotide sequence ID" value="XM_054363200.1"/>
</dbReference>
<dbReference type="RefSeq" id="XP_054219176.1">
    <property type="nucleotide sequence ID" value="XM_054363201.1"/>
</dbReference>
<dbReference type="PDB" id="4WY4">
    <property type="method" value="X-ray"/>
    <property type="resolution" value="1.40 A"/>
    <property type="chains" value="B=170-227"/>
</dbReference>
<dbReference type="PDB" id="7BV4">
    <property type="method" value="X-ray"/>
    <property type="resolution" value="2.00 A"/>
    <property type="chains" value="C/D/F/H=167-188"/>
</dbReference>
<dbReference type="PDB" id="7BV6">
    <property type="method" value="X-ray"/>
    <property type="resolution" value="3.05 A"/>
    <property type="chains" value="B/F/J/N/R/V=142-228"/>
</dbReference>
<dbReference type="PDBsum" id="4WY4"/>
<dbReference type="PDBsum" id="7BV4"/>
<dbReference type="PDBsum" id="7BV6"/>
<dbReference type="SMR" id="P56962"/>
<dbReference type="BioGRID" id="120346">
    <property type="interactions" value="282"/>
</dbReference>
<dbReference type="ComplexPortal" id="CPX-25782">
    <property type="entry name" value="SNARE complex STX17-SNAP29-VAMP8"/>
</dbReference>
<dbReference type="ComplexPortal" id="CPX-25783">
    <property type="entry name" value="SNARE complex STX17-SNAP29-VAMP7"/>
</dbReference>
<dbReference type="ComplexPortal" id="CPX-25786">
    <property type="entry name" value="SNARE priming complex STX17-SNAP29-YKT6"/>
</dbReference>
<dbReference type="DIP" id="DIP-47297N"/>
<dbReference type="FunCoup" id="P56962">
    <property type="interactions" value="2106"/>
</dbReference>
<dbReference type="IntAct" id="P56962">
    <property type="interactions" value="247"/>
</dbReference>
<dbReference type="MINT" id="P56962"/>
<dbReference type="STRING" id="9606.ENSP00000259400"/>
<dbReference type="TCDB" id="8.A.91.1.11">
    <property type="family name" value="the syntaxin (syntaxin) family"/>
</dbReference>
<dbReference type="GlyGen" id="P56962">
    <property type="glycosylation" value="1 site, 1 O-linked glycan (1 site)"/>
</dbReference>
<dbReference type="iPTMnet" id="P56962"/>
<dbReference type="PhosphoSitePlus" id="P56962"/>
<dbReference type="BioMuta" id="STX17"/>
<dbReference type="DMDM" id="212286190"/>
<dbReference type="jPOST" id="P56962"/>
<dbReference type="MassIVE" id="P56962"/>
<dbReference type="PaxDb" id="9606-ENSP00000259400"/>
<dbReference type="PeptideAtlas" id="P56962"/>
<dbReference type="ProteomicsDB" id="56962"/>
<dbReference type="Pumba" id="P56962"/>
<dbReference type="Antibodypedia" id="752">
    <property type="antibodies" value="150 antibodies from 26 providers"/>
</dbReference>
<dbReference type="DNASU" id="55014"/>
<dbReference type="Ensembl" id="ENST00000259400.11">
    <property type="protein sequence ID" value="ENSP00000259400.6"/>
    <property type="gene ID" value="ENSG00000136874.11"/>
</dbReference>
<dbReference type="Ensembl" id="ENST00000525640.5">
    <property type="protein sequence ID" value="ENSP00000435981.1"/>
    <property type="gene ID" value="ENSG00000136874.11"/>
</dbReference>
<dbReference type="Ensembl" id="ENST00000534052.1">
    <property type="protein sequence ID" value="ENSP00000433484.1"/>
    <property type="gene ID" value="ENSG00000136874.11"/>
</dbReference>
<dbReference type="GeneID" id="55014"/>
<dbReference type="KEGG" id="hsa:55014"/>
<dbReference type="MANE-Select" id="ENST00000259400.11">
    <property type="protein sequence ID" value="ENSP00000259400.6"/>
    <property type="RefSeq nucleotide sequence ID" value="NM_017919.3"/>
    <property type="RefSeq protein sequence ID" value="NP_060389.2"/>
</dbReference>
<dbReference type="UCSC" id="uc004bal.5">
    <property type="organism name" value="human"/>
</dbReference>
<dbReference type="AGR" id="HGNC:11432"/>
<dbReference type="CTD" id="55014"/>
<dbReference type="DisGeNET" id="55014"/>
<dbReference type="GeneCards" id="STX17"/>
<dbReference type="HGNC" id="HGNC:11432">
    <property type="gene designation" value="STX17"/>
</dbReference>
<dbReference type="HPA" id="ENSG00000136874">
    <property type="expression patterns" value="Low tissue specificity"/>
</dbReference>
<dbReference type="MIM" id="604204">
    <property type="type" value="gene"/>
</dbReference>
<dbReference type="neXtProt" id="NX_P56962"/>
<dbReference type="OpenTargets" id="ENSG00000136874"/>
<dbReference type="PharmGKB" id="PA36232"/>
<dbReference type="VEuPathDB" id="HostDB:ENSG00000136874"/>
<dbReference type="eggNOG" id="KOG0811">
    <property type="taxonomic scope" value="Eukaryota"/>
</dbReference>
<dbReference type="GeneTree" id="ENSGT01000000214440"/>
<dbReference type="HOGENOM" id="CLU_058244_1_0_1"/>
<dbReference type="InParanoid" id="P56962"/>
<dbReference type="OMA" id="YPVMGAL"/>
<dbReference type="OrthoDB" id="10035606at2759"/>
<dbReference type="PAN-GO" id="P56962">
    <property type="GO annotations" value="11 GO annotations based on evolutionary models"/>
</dbReference>
<dbReference type="PhylomeDB" id="P56962"/>
<dbReference type="TreeFam" id="TF323947"/>
<dbReference type="PathwayCommons" id="P56962"/>
<dbReference type="Reactome" id="R-HSA-204005">
    <property type="pathway name" value="COPII-mediated vesicle transport"/>
</dbReference>
<dbReference type="SignaLink" id="P56962"/>
<dbReference type="SIGNOR" id="P56962"/>
<dbReference type="BioGRID-ORCS" id="55014">
    <property type="hits" value="17 hits in 1160 CRISPR screens"/>
</dbReference>
<dbReference type="ChiTaRS" id="STX17">
    <property type="organism name" value="human"/>
</dbReference>
<dbReference type="EvolutionaryTrace" id="P56962"/>
<dbReference type="GenomeRNAi" id="55014"/>
<dbReference type="Pharos" id="P56962">
    <property type="development level" value="Tbio"/>
</dbReference>
<dbReference type="PRO" id="PR:P56962"/>
<dbReference type="Proteomes" id="UP000005640">
    <property type="component" value="Chromosome 9"/>
</dbReference>
<dbReference type="RNAct" id="P56962">
    <property type="molecule type" value="protein"/>
</dbReference>
<dbReference type="Bgee" id="ENSG00000136874">
    <property type="expression patterns" value="Expressed in nipple and 191 other cell types or tissues"/>
</dbReference>
<dbReference type="ExpressionAtlas" id="P56962">
    <property type="expression patterns" value="baseline and differential"/>
</dbReference>
<dbReference type="GO" id="GO:0120281">
    <property type="term" value="C:autolysosome membrane"/>
    <property type="evidence" value="ECO:0000314"/>
    <property type="project" value="UniProtKB"/>
</dbReference>
<dbReference type="GO" id="GO:0005776">
    <property type="term" value="C:autophagosome"/>
    <property type="evidence" value="ECO:0000314"/>
    <property type="project" value="GO_Central"/>
</dbReference>
<dbReference type="GO" id="GO:0000421">
    <property type="term" value="C:autophagosome membrane"/>
    <property type="evidence" value="ECO:0000314"/>
    <property type="project" value="UniProtKB"/>
</dbReference>
<dbReference type="GO" id="GO:0030134">
    <property type="term" value="C:COPII-coated ER to Golgi transport vesicle"/>
    <property type="evidence" value="ECO:0000250"/>
    <property type="project" value="UniProtKB"/>
</dbReference>
<dbReference type="GO" id="GO:0005829">
    <property type="term" value="C:cytosol"/>
    <property type="evidence" value="ECO:0000250"/>
    <property type="project" value="UniProtKB"/>
</dbReference>
<dbReference type="GO" id="GO:0012505">
    <property type="term" value="C:endomembrane system"/>
    <property type="evidence" value="ECO:0000318"/>
    <property type="project" value="GO_Central"/>
</dbReference>
<dbReference type="GO" id="GO:0005789">
    <property type="term" value="C:endoplasmic reticulum membrane"/>
    <property type="evidence" value="ECO:0000314"/>
    <property type="project" value="UniProtKB"/>
</dbReference>
<dbReference type="GO" id="GO:0005793">
    <property type="term" value="C:endoplasmic reticulum-Golgi intermediate compartment"/>
    <property type="evidence" value="ECO:0000314"/>
    <property type="project" value="UniProtKB"/>
</dbReference>
<dbReference type="GO" id="GO:0033116">
    <property type="term" value="C:endoplasmic reticulum-Golgi intermediate compartment membrane"/>
    <property type="evidence" value="ECO:0007669"/>
    <property type="project" value="UniProtKB-SubCell"/>
</dbReference>
<dbReference type="GO" id="GO:0012507">
    <property type="term" value="C:ER to Golgi transport vesicle membrane"/>
    <property type="evidence" value="ECO:0007669"/>
    <property type="project" value="UniProtKB-SubCell"/>
</dbReference>
<dbReference type="GO" id="GO:0044233">
    <property type="term" value="C:mitochondria-associated endoplasmic reticulum membrane contact site"/>
    <property type="evidence" value="ECO:0000314"/>
    <property type="project" value="MGI"/>
</dbReference>
<dbReference type="GO" id="GO:0005739">
    <property type="term" value="C:mitochondrion"/>
    <property type="evidence" value="ECO:0000314"/>
    <property type="project" value="UniProtKB"/>
</dbReference>
<dbReference type="GO" id="GO:0005886">
    <property type="term" value="C:plasma membrane"/>
    <property type="evidence" value="ECO:0000318"/>
    <property type="project" value="GO_Central"/>
</dbReference>
<dbReference type="GO" id="GO:0030868">
    <property type="term" value="C:smooth endoplasmic reticulum membrane"/>
    <property type="evidence" value="ECO:0000250"/>
    <property type="project" value="UniProtKB"/>
</dbReference>
<dbReference type="GO" id="GO:0031201">
    <property type="term" value="C:SNARE complex"/>
    <property type="evidence" value="ECO:0000314"/>
    <property type="project" value="UniProtKB"/>
</dbReference>
<dbReference type="GO" id="GO:0019901">
    <property type="term" value="F:protein kinase binding"/>
    <property type="evidence" value="ECO:0007669"/>
    <property type="project" value="Ensembl"/>
</dbReference>
<dbReference type="GO" id="GO:0019903">
    <property type="term" value="F:protein phosphatase binding"/>
    <property type="evidence" value="ECO:0000353"/>
    <property type="project" value="UniProtKB"/>
</dbReference>
<dbReference type="GO" id="GO:0005484">
    <property type="term" value="F:SNAP receptor activity"/>
    <property type="evidence" value="ECO:0000315"/>
    <property type="project" value="UniProtKB"/>
</dbReference>
<dbReference type="GO" id="GO:0000149">
    <property type="term" value="F:SNARE binding"/>
    <property type="evidence" value="ECO:0000314"/>
    <property type="project" value="UniProtKB"/>
</dbReference>
<dbReference type="GO" id="GO:0097352">
    <property type="term" value="P:autophagosome maturation"/>
    <property type="evidence" value="ECO:0000314"/>
    <property type="project" value="UniProtKB"/>
</dbReference>
<dbReference type="GO" id="GO:0016240">
    <property type="term" value="P:autophagosome membrane docking"/>
    <property type="evidence" value="ECO:0000314"/>
    <property type="project" value="GO_Central"/>
</dbReference>
<dbReference type="GO" id="GO:0061909">
    <property type="term" value="P:autophagosome-lysosome fusion"/>
    <property type="evidence" value="ECO:0000314"/>
    <property type="project" value="UniProtKB"/>
</dbReference>
<dbReference type="GO" id="GO:0006888">
    <property type="term" value="P:endoplasmic reticulum to Golgi vesicle-mediated transport"/>
    <property type="evidence" value="ECO:0000315"/>
    <property type="project" value="UniProtKB"/>
</dbReference>
<dbReference type="GO" id="GO:0097111">
    <property type="term" value="P:endoplasmic reticulum-Golgi intermediate compartment organization"/>
    <property type="evidence" value="ECO:0000315"/>
    <property type="project" value="UniProtKB"/>
</dbReference>
<dbReference type="GO" id="GO:0006887">
    <property type="term" value="P:exocytosis"/>
    <property type="evidence" value="ECO:0000318"/>
    <property type="project" value="GO_Central"/>
</dbReference>
<dbReference type="GO" id="GO:0007030">
    <property type="term" value="P:Golgi organization"/>
    <property type="evidence" value="ECO:0000315"/>
    <property type="project" value="UniProtKB"/>
</dbReference>
<dbReference type="GO" id="GO:0006886">
    <property type="term" value="P:intracellular protein transport"/>
    <property type="evidence" value="ECO:0000318"/>
    <property type="project" value="GO_Central"/>
</dbReference>
<dbReference type="GO" id="GO:0034497">
    <property type="term" value="P:protein localization to phagophore assembly site"/>
    <property type="evidence" value="ECO:0000314"/>
    <property type="project" value="MGI"/>
</dbReference>
<dbReference type="GO" id="GO:0048278">
    <property type="term" value="P:vesicle docking"/>
    <property type="evidence" value="ECO:0000318"/>
    <property type="project" value="GO_Central"/>
</dbReference>
<dbReference type="GO" id="GO:0006906">
    <property type="term" value="P:vesicle fusion"/>
    <property type="evidence" value="ECO:0000318"/>
    <property type="project" value="GO_Central"/>
</dbReference>
<dbReference type="CDD" id="cd15846">
    <property type="entry name" value="SNARE_syntaxin17"/>
    <property type="match status" value="1"/>
</dbReference>
<dbReference type="FunFam" id="1.20.5.110:FF:000046">
    <property type="entry name" value="syntaxin-17 isoform X1"/>
    <property type="match status" value="1"/>
</dbReference>
<dbReference type="Gene3D" id="1.20.5.110">
    <property type="match status" value="1"/>
</dbReference>
<dbReference type="InterPro" id="IPR010989">
    <property type="entry name" value="SNARE"/>
</dbReference>
<dbReference type="InterPro" id="IPR028676">
    <property type="entry name" value="STX17_SNARE"/>
</dbReference>
<dbReference type="InterPro" id="IPR045242">
    <property type="entry name" value="Syntaxin"/>
</dbReference>
<dbReference type="InterPro" id="IPR006012">
    <property type="entry name" value="Syntaxin/epimorphin_CS"/>
</dbReference>
<dbReference type="InterPro" id="IPR000727">
    <property type="entry name" value="T_SNARE_dom"/>
</dbReference>
<dbReference type="PANTHER" id="PTHR19957">
    <property type="entry name" value="SYNTAXIN"/>
    <property type="match status" value="1"/>
</dbReference>
<dbReference type="PANTHER" id="PTHR19957:SF139">
    <property type="entry name" value="SYNTAXIN-17"/>
    <property type="match status" value="1"/>
</dbReference>
<dbReference type="SMART" id="SM00397">
    <property type="entry name" value="t_SNARE"/>
    <property type="match status" value="1"/>
</dbReference>
<dbReference type="SUPFAM" id="SSF47661">
    <property type="entry name" value="t-snare proteins"/>
    <property type="match status" value="1"/>
</dbReference>
<dbReference type="PROSITE" id="PS00914">
    <property type="entry name" value="SYNTAXIN"/>
    <property type="match status" value="1"/>
</dbReference>
<dbReference type="PROSITE" id="PS50192">
    <property type="entry name" value="T_SNARE"/>
    <property type="match status" value="1"/>
</dbReference>
<proteinExistence type="evidence at protein level"/>
<protein>
    <recommendedName>
        <fullName evidence="18">Syntaxin-17</fullName>
    </recommendedName>
</protein>
<feature type="initiator methionine" description="Removed" evidence="22">
    <location>
        <position position="1"/>
    </location>
</feature>
<feature type="chain" id="PRO_0000210228" description="Syntaxin-17">
    <location>
        <begin position="2"/>
        <end position="302"/>
    </location>
</feature>
<feature type="topological domain" description="Cytoplasmic" evidence="2">
    <location>
        <begin position="2"/>
        <end position="228"/>
    </location>
</feature>
<feature type="transmembrane region" description="Helical" evidence="2">
    <location>
        <begin position="229"/>
        <end position="249"/>
    </location>
</feature>
<feature type="topological domain" description="Lumenal" evidence="2">
    <location>
        <begin position="250"/>
        <end position="254"/>
    </location>
</feature>
<feature type="transmembrane region" description="Helical" evidence="2">
    <location>
        <begin position="255"/>
        <end position="275"/>
    </location>
</feature>
<feature type="topological domain" description="Cytoplasmic" evidence="2">
    <location>
        <begin position="276"/>
        <end position="302"/>
    </location>
</feature>
<feature type="domain" description="t-SNARE coiled-coil homology" evidence="3">
    <location>
        <begin position="162"/>
        <end position="224"/>
    </location>
</feature>
<feature type="region of interest" description="Necessary and sufficient for localization to autophagosome" evidence="6">
    <location>
        <begin position="229"/>
        <end position="275"/>
    </location>
</feature>
<feature type="coiled-coil region" evidence="2">
    <location>
        <begin position="53"/>
        <end position="123"/>
    </location>
</feature>
<feature type="short sequence motif" description="Endoplasmic reticulum retention signal" evidence="2">
    <location>
        <begin position="299"/>
        <end position="302"/>
    </location>
</feature>
<feature type="modified residue" description="N-acetylserine" evidence="22">
    <location>
        <position position="2"/>
    </location>
</feature>
<feature type="modified residue" description="N6-acetyllysine" evidence="21">
    <location>
        <position position="41"/>
    </location>
</feature>
<feature type="modified residue" description="Phosphotyrosine; by ABL1" evidence="1">
    <location>
        <position position="157"/>
    </location>
</feature>
<feature type="modified residue" description="Phosphoserine" evidence="23">
    <location>
        <position position="289"/>
    </location>
</feature>
<feature type="mutagenesis site" description="Alters localization to the autophagosome; when associated with Leu-248." evidence="6">
    <original>G</original>
    <variation>L</variation>
    <location>
        <position position="244"/>
    </location>
</feature>
<feature type="mutagenesis site" description="Alters localization to the autophagosome; when associated with Leu-244." evidence="6">
    <original>G</original>
    <variation>L</variation>
    <location>
        <position position="248"/>
    </location>
</feature>
<feature type="mutagenesis site" description="Alters localization to the autophagosome; when associated with Leu-268." evidence="6">
    <original>G</original>
    <variation>L</variation>
    <location>
        <position position="264"/>
    </location>
</feature>
<feature type="mutagenesis site" description="Alters localization to the autophagosome; when associated with Leu-264." evidence="6">
    <original>G</original>
    <variation>L</variation>
    <location>
        <position position="268"/>
    </location>
</feature>
<feature type="mutagenesis site" description="Localizes to the Golgi instead of the endoplasmic reticulum." evidence="6">
    <original>KK</original>
    <variation>AA</variation>
    <location>
        <begin position="299"/>
        <end position="300"/>
    </location>
</feature>
<feature type="sequence conflict" description="In Ref. 1; BAA91311." evidence="19" ref="1">
    <original>D</original>
    <variation>N</variation>
    <location>
        <position position="28"/>
    </location>
</feature>
<feature type="sequence conflict" description="In Ref. 1; BAA91311." evidence="19" ref="1">
    <original>W</original>
    <variation>R</variation>
    <location>
        <position position="172"/>
    </location>
</feature>
<feature type="sequence conflict" description="In Ref. 1; BAA91311." evidence="19" ref="1">
    <original>G</original>
    <variation>C</variation>
    <location>
        <position position="252"/>
    </location>
</feature>
<feature type="helix" evidence="24">
    <location>
        <begin position="173"/>
        <end position="195"/>
    </location>
</feature>
<feature type="helix" evidence="24">
    <location>
        <begin position="197"/>
        <end position="226"/>
    </location>
</feature>
<organism>
    <name type="scientific">Homo sapiens</name>
    <name type="common">Human</name>
    <dbReference type="NCBI Taxonomy" id="9606"/>
    <lineage>
        <taxon>Eukaryota</taxon>
        <taxon>Metazoa</taxon>
        <taxon>Chordata</taxon>
        <taxon>Craniata</taxon>
        <taxon>Vertebrata</taxon>
        <taxon>Euteleostomi</taxon>
        <taxon>Mammalia</taxon>
        <taxon>Eutheria</taxon>
        <taxon>Euarchontoglires</taxon>
        <taxon>Primates</taxon>
        <taxon>Haplorrhini</taxon>
        <taxon>Catarrhini</taxon>
        <taxon>Hominidae</taxon>
        <taxon>Homo</taxon>
    </lineage>
</organism>
<sequence>MSEDEEKVKLRRLEPAIQKFIKIVIPTDLERLRKHQINIEKYQRCRIWDKLHEEHINAGRTVQQLRSNIREIEKLCLKVRKDDLVLLKRMIDPVKEEASAATAEFLQLHLESVEELKKQFNDEETLLQPPLTRSMTVGGAFHTTEAEASSQSLTQIYALPEIPQDQNAAESWETLEADLIELSQLVTDFSLLVNSQQEKIDSIADHVNSAAVNVEEGTKNLGKAAKYKLAALPVAGALIGGMVGGPIGLLAGFKVAGIAAALGGGVLGFTGGKLIQRKKQKMMEKLTSSCPDLPSQTDKKCS</sequence>
<reference key="1">
    <citation type="journal article" date="2004" name="Nat. Genet.">
        <title>Complete sequencing and characterization of 21,243 full-length human cDNAs.</title>
        <authorList>
            <person name="Ota T."/>
            <person name="Suzuki Y."/>
            <person name="Nishikawa T."/>
            <person name="Otsuki T."/>
            <person name="Sugiyama T."/>
            <person name="Irie R."/>
            <person name="Wakamatsu A."/>
            <person name="Hayashi K."/>
            <person name="Sato H."/>
            <person name="Nagai K."/>
            <person name="Kimura K."/>
            <person name="Makita H."/>
            <person name="Sekine M."/>
            <person name="Obayashi M."/>
            <person name="Nishi T."/>
            <person name="Shibahara T."/>
            <person name="Tanaka T."/>
            <person name="Ishii S."/>
            <person name="Yamamoto J."/>
            <person name="Saito K."/>
            <person name="Kawai Y."/>
            <person name="Isono Y."/>
            <person name="Nakamura Y."/>
            <person name="Nagahari K."/>
            <person name="Murakami K."/>
            <person name="Yasuda T."/>
            <person name="Iwayanagi T."/>
            <person name="Wagatsuma M."/>
            <person name="Shiratori A."/>
            <person name="Sudo H."/>
            <person name="Hosoiri T."/>
            <person name="Kaku Y."/>
            <person name="Kodaira H."/>
            <person name="Kondo H."/>
            <person name="Sugawara M."/>
            <person name="Takahashi M."/>
            <person name="Kanda K."/>
            <person name="Yokoi T."/>
            <person name="Furuya T."/>
            <person name="Kikkawa E."/>
            <person name="Omura Y."/>
            <person name="Abe K."/>
            <person name="Kamihara K."/>
            <person name="Katsuta N."/>
            <person name="Sato K."/>
            <person name="Tanikawa M."/>
            <person name="Yamazaki M."/>
            <person name="Ninomiya K."/>
            <person name="Ishibashi T."/>
            <person name="Yamashita H."/>
            <person name="Murakawa K."/>
            <person name="Fujimori K."/>
            <person name="Tanai H."/>
            <person name="Kimata M."/>
            <person name="Watanabe M."/>
            <person name="Hiraoka S."/>
            <person name="Chiba Y."/>
            <person name="Ishida S."/>
            <person name="Ono Y."/>
            <person name="Takiguchi S."/>
            <person name="Watanabe S."/>
            <person name="Yosida M."/>
            <person name="Hotuta T."/>
            <person name="Kusano J."/>
            <person name="Kanehori K."/>
            <person name="Takahashi-Fujii A."/>
            <person name="Hara H."/>
            <person name="Tanase T.-O."/>
            <person name="Nomura Y."/>
            <person name="Togiya S."/>
            <person name="Komai F."/>
            <person name="Hara R."/>
            <person name="Takeuchi K."/>
            <person name="Arita M."/>
            <person name="Imose N."/>
            <person name="Musashino K."/>
            <person name="Yuuki H."/>
            <person name="Oshima A."/>
            <person name="Sasaki N."/>
            <person name="Aotsuka S."/>
            <person name="Yoshikawa Y."/>
            <person name="Matsunawa H."/>
            <person name="Ichihara T."/>
            <person name="Shiohata N."/>
            <person name="Sano S."/>
            <person name="Moriya S."/>
            <person name="Momiyama H."/>
            <person name="Satoh N."/>
            <person name="Takami S."/>
            <person name="Terashima Y."/>
            <person name="Suzuki O."/>
            <person name="Nakagawa S."/>
            <person name="Senoh A."/>
            <person name="Mizoguchi H."/>
            <person name="Goto Y."/>
            <person name="Shimizu F."/>
            <person name="Wakebe H."/>
            <person name="Hishigaki H."/>
            <person name="Watanabe T."/>
            <person name="Sugiyama A."/>
            <person name="Takemoto M."/>
            <person name="Kawakami B."/>
            <person name="Yamazaki M."/>
            <person name="Watanabe K."/>
            <person name="Kumagai A."/>
            <person name="Itakura S."/>
            <person name="Fukuzumi Y."/>
            <person name="Fujimori Y."/>
            <person name="Komiyama M."/>
            <person name="Tashiro H."/>
            <person name="Tanigami A."/>
            <person name="Fujiwara T."/>
            <person name="Ono T."/>
            <person name="Yamada K."/>
            <person name="Fujii Y."/>
            <person name="Ozaki K."/>
            <person name="Hirao M."/>
            <person name="Ohmori Y."/>
            <person name="Kawabata A."/>
            <person name="Hikiji T."/>
            <person name="Kobatake N."/>
            <person name="Inagaki H."/>
            <person name="Ikema Y."/>
            <person name="Okamoto S."/>
            <person name="Okitani R."/>
            <person name="Kawakami T."/>
            <person name="Noguchi S."/>
            <person name="Itoh T."/>
            <person name="Shigeta K."/>
            <person name="Senba T."/>
            <person name="Matsumura K."/>
            <person name="Nakajima Y."/>
            <person name="Mizuno T."/>
            <person name="Morinaga M."/>
            <person name="Sasaki M."/>
            <person name="Togashi T."/>
            <person name="Oyama M."/>
            <person name="Hata H."/>
            <person name="Watanabe M."/>
            <person name="Komatsu T."/>
            <person name="Mizushima-Sugano J."/>
            <person name="Satoh T."/>
            <person name="Shirai Y."/>
            <person name="Takahashi Y."/>
            <person name="Nakagawa K."/>
            <person name="Okumura K."/>
            <person name="Nagase T."/>
            <person name="Nomura N."/>
            <person name="Kikuchi H."/>
            <person name="Masuho Y."/>
            <person name="Yamashita R."/>
            <person name="Nakai K."/>
            <person name="Yada T."/>
            <person name="Nakamura Y."/>
            <person name="Ohara O."/>
            <person name="Isogai T."/>
            <person name="Sugano S."/>
        </authorList>
    </citation>
    <scope>NUCLEOTIDE SEQUENCE [LARGE SCALE MRNA]</scope>
</reference>
<reference key="2">
    <citation type="journal article" date="2004" name="Nature">
        <title>DNA sequence and analysis of human chromosome 9.</title>
        <authorList>
            <person name="Humphray S.J."/>
            <person name="Oliver K."/>
            <person name="Hunt A.R."/>
            <person name="Plumb R.W."/>
            <person name="Loveland J.E."/>
            <person name="Howe K.L."/>
            <person name="Andrews T.D."/>
            <person name="Searle S."/>
            <person name="Hunt S.E."/>
            <person name="Scott C.E."/>
            <person name="Jones M.C."/>
            <person name="Ainscough R."/>
            <person name="Almeida J.P."/>
            <person name="Ambrose K.D."/>
            <person name="Ashwell R.I.S."/>
            <person name="Babbage A.K."/>
            <person name="Babbage S."/>
            <person name="Bagguley C.L."/>
            <person name="Bailey J."/>
            <person name="Banerjee R."/>
            <person name="Barker D.J."/>
            <person name="Barlow K.F."/>
            <person name="Bates K."/>
            <person name="Beasley H."/>
            <person name="Beasley O."/>
            <person name="Bird C.P."/>
            <person name="Bray-Allen S."/>
            <person name="Brown A.J."/>
            <person name="Brown J.Y."/>
            <person name="Burford D."/>
            <person name="Burrill W."/>
            <person name="Burton J."/>
            <person name="Carder C."/>
            <person name="Carter N.P."/>
            <person name="Chapman J.C."/>
            <person name="Chen Y."/>
            <person name="Clarke G."/>
            <person name="Clark S.Y."/>
            <person name="Clee C.M."/>
            <person name="Clegg S."/>
            <person name="Collier R.E."/>
            <person name="Corby N."/>
            <person name="Crosier M."/>
            <person name="Cummings A.T."/>
            <person name="Davies J."/>
            <person name="Dhami P."/>
            <person name="Dunn M."/>
            <person name="Dutta I."/>
            <person name="Dyer L.W."/>
            <person name="Earthrowl M.E."/>
            <person name="Faulkner L."/>
            <person name="Fleming C.J."/>
            <person name="Frankish A."/>
            <person name="Frankland J.A."/>
            <person name="French L."/>
            <person name="Fricker D.G."/>
            <person name="Garner P."/>
            <person name="Garnett J."/>
            <person name="Ghori J."/>
            <person name="Gilbert J.G.R."/>
            <person name="Glison C."/>
            <person name="Grafham D.V."/>
            <person name="Gribble S."/>
            <person name="Griffiths C."/>
            <person name="Griffiths-Jones S."/>
            <person name="Grocock R."/>
            <person name="Guy J."/>
            <person name="Hall R.E."/>
            <person name="Hammond S."/>
            <person name="Harley J.L."/>
            <person name="Harrison E.S.I."/>
            <person name="Hart E.A."/>
            <person name="Heath P.D."/>
            <person name="Henderson C.D."/>
            <person name="Hopkins B.L."/>
            <person name="Howard P.J."/>
            <person name="Howden P.J."/>
            <person name="Huckle E."/>
            <person name="Johnson C."/>
            <person name="Johnson D."/>
            <person name="Joy A.A."/>
            <person name="Kay M."/>
            <person name="Keenan S."/>
            <person name="Kershaw J.K."/>
            <person name="Kimberley A.M."/>
            <person name="King A."/>
            <person name="Knights A."/>
            <person name="Laird G.K."/>
            <person name="Langford C."/>
            <person name="Lawlor S."/>
            <person name="Leongamornlert D.A."/>
            <person name="Leversha M."/>
            <person name="Lloyd C."/>
            <person name="Lloyd D.M."/>
            <person name="Lovell J."/>
            <person name="Martin S."/>
            <person name="Mashreghi-Mohammadi M."/>
            <person name="Matthews L."/>
            <person name="McLaren S."/>
            <person name="McLay K.E."/>
            <person name="McMurray A."/>
            <person name="Milne S."/>
            <person name="Nickerson T."/>
            <person name="Nisbett J."/>
            <person name="Nordsiek G."/>
            <person name="Pearce A.V."/>
            <person name="Peck A.I."/>
            <person name="Porter K.M."/>
            <person name="Pandian R."/>
            <person name="Pelan S."/>
            <person name="Phillimore B."/>
            <person name="Povey S."/>
            <person name="Ramsey Y."/>
            <person name="Rand V."/>
            <person name="Scharfe M."/>
            <person name="Sehra H.K."/>
            <person name="Shownkeen R."/>
            <person name="Sims S.K."/>
            <person name="Skuce C.D."/>
            <person name="Smith M."/>
            <person name="Steward C.A."/>
            <person name="Swarbreck D."/>
            <person name="Sycamore N."/>
            <person name="Tester J."/>
            <person name="Thorpe A."/>
            <person name="Tracey A."/>
            <person name="Tromans A."/>
            <person name="Thomas D.W."/>
            <person name="Wall M."/>
            <person name="Wallis J.M."/>
            <person name="West A.P."/>
            <person name="Whitehead S.L."/>
            <person name="Willey D.L."/>
            <person name="Williams S.A."/>
            <person name="Wilming L."/>
            <person name="Wray P.W."/>
            <person name="Young L."/>
            <person name="Ashurst J.L."/>
            <person name="Coulson A."/>
            <person name="Blocker H."/>
            <person name="Durbin R.M."/>
            <person name="Sulston J.E."/>
            <person name="Hubbard T."/>
            <person name="Jackson M.J."/>
            <person name="Bentley D.R."/>
            <person name="Beck S."/>
            <person name="Rogers J."/>
            <person name="Dunham I."/>
        </authorList>
    </citation>
    <scope>NUCLEOTIDE SEQUENCE [LARGE SCALE GENOMIC DNA]</scope>
</reference>
<reference key="3">
    <citation type="submission" date="2005-07" db="EMBL/GenBank/DDBJ databases">
        <authorList>
            <person name="Mural R.J."/>
            <person name="Istrail S."/>
            <person name="Sutton G.G."/>
            <person name="Florea L."/>
            <person name="Halpern A.L."/>
            <person name="Mobarry C.M."/>
            <person name="Lippert R."/>
            <person name="Walenz B."/>
            <person name="Shatkay H."/>
            <person name="Dew I."/>
            <person name="Miller J.R."/>
            <person name="Flanigan M.J."/>
            <person name="Edwards N.J."/>
            <person name="Bolanos R."/>
            <person name="Fasulo D."/>
            <person name="Halldorsson B.V."/>
            <person name="Hannenhalli S."/>
            <person name="Turner R."/>
            <person name="Yooseph S."/>
            <person name="Lu F."/>
            <person name="Nusskern D.R."/>
            <person name="Shue B.C."/>
            <person name="Zheng X.H."/>
            <person name="Zhong F."/>
            <person name="Delcher A.L."/>
            <person name="Huson D.H."/>
            <person name="Kravitz S.A."/>
            <person name="Mouchard L."/>
            <person name="Reinert K."/>
            <person name="Remington K.A."/>
            <person name="Clark A.G."/>
            <person name="Waterman M.S."/>
            <person name="Eichler E.E."/>
            <person name="Adams M.D."/>
            <person name="Hunkapiller M.W."/>
            <person name="Myers E.W."/>
            <person name="Venter J.C."/>
        </authorList>
    </citation>
    <scope>NUCLEOTIDE SEQUENCE [LARGE SCALE GENOMIC DNA]</scope>
</reference>
<reference key="4">
    <citation type="journal article" date="2004" name="Genome Res.">
        <title>The status, quality, and expansion of the NIH full-length cDNA project: the Mammalian Gene Collection (MGC).</title>
        <authorList>
            <consortium name="The MGC Project Team"/>
        </authorList>
    </citation>
    <scope>NUCLEOTIDE SEQUENCE [LARGE SCALE MRNA]</scope>
    <source>
        <tissue>Brain</tissue>
    </source>
</reference>
<reference key="5">
    <citation type="journal article" date="2009" name="Anal. Chem.">
        <title>Lys-N and trypsin cover complementary parts of the phosphoproteome in a refined SCX-based approach.</title>
        <authorList>
            <person name="Gauci S."/>
            <person name="Helbig A.O."/>
            <person name="Slijper M."/>
            <person name="Krijgsveld J."/>
            <person name="Heck A.J."/>
            <person name="Mohammed S."/>
        </authorList>
    </citation>
    <scope>IDENTIFICATION BY MASS SPECTROMETRY [LARGE SCALE ANALYSIS]</scope>
</reference>
<reference key="6">
    <citation type="journal article" date="2009" name="Science">
        <title>Lysine acetylation targets protein complexes and co-regulates major cellular functions.</title>
        <authorList>
            <person name="Choudhary C."/>
            <person name="Kumar C."/>
            <person name="Gnad F."/>
            <person name="Nielsen M.L."/>
            <person name="Rehman M."/>
            <person name="Walther T.C."/>
            <person name="Olsen J.V."/>
            <person name="Mann M."/>
        </authorList>
    </citation>
    <scope>ACETYLATION [LARGE SCALE ANALYSIS] AT LYS-41</scope>
    <scope>IDENTIFICATION BY MASS SPECTROMETRY [LARGE SCALE ANALYSIS]</scope>
</reference>
<reference key="7">
    <citation type="journal article" date="2011" name="BMC Syst. Biol.">
        <title>Initial characterization of the human central proteome.</title>
        <authorList>
            <person name="Burkard T.R."/>
            <person name="Planyavsky M."/>
            <person name="Kaupe I."/>
            <person name="Breitwieser F.P."/>
            <person name="Buerckstuemmer T."/>
            <person name="Bennett K.L."/>
            <person name="Superti-Furga G."/>
            <person name="Colinge J."/>
        </authorList>
    </citation>
    <scope>IDENTIFICATION BY MASS SPECTROMETRY [LARGE SCALE ANALYSIS]</scope>
</reference>
<reference key="8">
    <citation type="journal article" date="2011" name="Biol. Cell">
        <title>Syntaxin 17 cycles between the ER and ERGIC and is required to maintain the architecture of ERGIC and Golgi.</title>
        <authorList>
            <person name="Muppirala M."/>
            <person name="Gupta V."/>
            <person name="Swarup G."/>
        </authorList>
    </citation>
    <scope>FUNCTION</scope>
    <scope>INTERACTION WITH TMED9 AND TMED10</scope>
</reference>
<reference key="9">
    <citation type="journal article" date="2012" name="Biochim. Biophys. Acta">
        <title>Tyrosine phosphorylation of a SNARE protein, Syntaxin 17: Implications for membrane trafficking in the early secretory pathway.</title>
        <authorList>
            <person name="Muppirala M."/>
            <person name="Gupta V."/>
            <person name="Swarup G."/>
        </authorList>
    </citation>
    <scope>INTERACTION WITH ABL1 AND PTPN2</scope>
    <scope>SUBCELLULAR LOCATION</scope>
</reference>
<reference key="10">
    <citation type="journal article" date="2012" name="Cell">
        <title>The hairpin-type tail-anchored SNARE syntaxin 17 targets to autophagosomes for fusion with endosomes/lysosomes.</title>
        <authorList>
            <person name="Itakura E."/>
            <person name="Kishi-Itakura C."/>
            <person name="Mizushima N."/>
        </authorList>
    </citation>
    <scope>FUNCTION IN AUTOPHAGY</scope>
    <scope>SUBCELLULAR LOCATION</scope>
    <scope>TOPOLOGY</scope>
    <scope>INTERACTION WITH SNAP29; VAMP7; VAMP8 AND VTI1B</scope>
    <scope>MUTAGENESIS OF GLY-244; GLY-248; GLY-264; GLY-268 AND 299-LYS-LYS-300</scope>
</reference>
<reference key="11">
    <citation type="journal article" date="2012" name="Proc. Natl. Acad. Sci. U.S.A.">
        <title>N-terminal acetylome analyses and functional insights of the N-terminal acetyltransferase NatB.</title>
        <authorList>
            <person name="Van Damme P."/>
            <person name="Lasa M."/>
            <person name="Polevoda B."/>
            <person name="Gazquez C."/>
            <person name="Elosegui-Artola A."/>
            <person name="Kim D.S."/>
            <person name="De Juan-Pardo E."/>
            <person name="Demeyer K."/>
            <person name="Hole K."/>
            <person name="Larrea E."/>
            <person name="Timmerman E."/>
            <person name="Prieto J."/>
            <person name="Arnesen T."/>
            <person name="Sherman F."/>
            <person name="Gevaert K."/>
            <person name="Aldabe R."/>
        </authorList>
    </citation>
    <scope>ACETYLATION [LARGE SCALE ANALYSIS] AT SER-2</scope>
    <scope>CLEAVAGE OF INITIATOR METHIONINE [LARGE SCALE ANALYSIS]</scope>
    <scope>IDENTIFICATION BY MASS SPECTROMETRY [LARGE SCALE ANALYSIS]</scope>
</reference>
<reference key="12">
    <citation type="journal article" date="2013" name="J. Proteome Res.">
        <title>Toward a comprehensive characterization of a human cancer cell phosphoproteome.</title>
        <authorList>
            <person name="Zhou H."/>
            <person name="Di Palma S."/>
            <person name="Preisinger C."/>
            <person name="Peng M."/>
            <person name="Polat A.N."/>
            <person name="Heck A.J."/>
            <person name="Mohammed S."/>
        </authorList>
    </citation>
    <scope>PHOSPHORYLATION [LARGE SCALE ANALYSIS] AT SER-289</scope>
    <scope>IDENTIFICATION BY MASS SPECTROMETRY [LARGE SCALE ANALYSIS]</scope>
    <source>
        <tissue>Erythroleukemia</tissue>
    </source>
</reference>
<reference key="13">
    <citation type="journal article" date="2014" name="J. Proteomics">
        <title>An enzyme assisted RP-RPLC approach for in-depth analysis of human liver phosphoproteome.</title>
        <authorList>
            <person name="Bian Y."/>
            <person name="Song C."/>
            <person name="Cheng K."/>
            <person name="Dong M."/>
            <person name="Wang F."/>
            <person name="Huang J."/>
            <person name="Sun D."/>
            <person name="Wang L."/>
            <person name="Ye M."/>
            <person name="Zou H."/>
        </authorList>
    </citation>
    <scope>IDENTIFICATION BY MASS SPECTROMETRY [LARGE SCALE ANALYSIS]</scope>
    <source>
        <tissue>Liver</tissue>
    </source>
</reference>
<reference key="14">
    <citation type="journal article" date="2015" name="J. Cell Biol.">
        <title>RUN and FYVE domain-containing protein 4 enhances autophagy and lysosome tethering in response to Interleukin-4.</title>
        <authorList>
            <person name="Terawaki S."/>
            <person name="Camosseto V."/>
            <person name="Prete F."/>
            <person name="Wenger T."/>
            <person name="Papadopoulos A."/>
            <person name="Rondeau C."/>
            <person name="Combes A."/>
            <person name="Rodriguez Rodrigues C."/>
            <person name="Vu Manh T.P."/>
            <person name="Fallet M."/>
            <person name="English L."/>
            <person name="Santamaria R."/>
            <person name="Soares A.R."/>
            <person name="Weil T."/>
            <person name="Hammad H."/>
            <person name="Desjardins M."/>
            <person name="Gorvel J.P."/>
            <person name="Santos M.A."/>
            <person name="Gatti E."/>
            <person name="Pierre P."/>
        </authorList>
    </citation>
    <scope>SUBCELLULAR LOCATION</scope>
</reference>
<reference key="15">
    <citation type="journal article" date="2017" name="Mol. Cell">
        <title>Pacer mediates the function of class III PI3K and HOPS complexes in autophagosome maturation by engaging Stx17.</title>
        <authorList>
            <person name="Cheng X."/>
            <person name="Ma X."/>
            <person name="Ding X."/>
            <person name="Li L."/>
            <person name="Jiang X."/>
            <person name="Shen Z."/>
            <person name="Chen S."/>
            <person name="Liu W."/>
            <person name="Gong W."/>
            <person name="Sun Q."/>
        </authorList>
    </citation>
    <scope>FUNCTION</scope>
    <scope>INTERACTION WITH RUBCNL/PACER</scope>
    <scope>SUBCELLULAR LOCATION</scope>
</reference>
<reference key="16">
    <citation type="journal article" date="2017" name="Nat. Commun.">
        <title>Legionella effector Lpg1137 shuts down ER-mitochondria communication through cleavage of syntaxin 17.</title>
        <authorList>
            <person name="Arasaki K."/>
            <person name="Mikami Y."/>
            <person name="Shames S.R."/>
            <person name="Inoue H."/>
            <person name="Wakana Y."/>
            <person name="Tagaya M."/>
        </authorList>
    </citation>
    <scope>FUNCTION</scope>
    <scope>SUBCELLULAR LOCATION</scope>
    <scope>PROTEOLYTIC CLEAVAGE (MICROBIAL INFECTION)</scope>
</reference>
<reference key="17">
    <citation type="journal article" date="2018" name="J. Cell Biol.">
        <title>Mechanism of Stx17 recruitment to autophagosomes via IRGM and mammalian Atg8 proteins.</title>
        <authorList>
            <person name="Kumar S."/>
            <person name="Jain A."/>
            <person name="Farzam F."/>
            <person name="Jia J."/>
            <person name="Gu Y."/>
            <person name="Choi S.W."/>
            <person name="Mudd M.H."/>
            <person name="Claude-Taupin A."/>
            <person name="Wester M.J."/>
            <person name="Lidke K.A."/>
            <person name="Rusten T.E."/>
            <person name="Deretic V."/>
        </authorList>
    </citation>
    <scope>SUBCELLULAR LOCATION</scope>
    <scope>INTERACTION WITH IRGM; MAP1LC3B AND GABARAP</scope>
</reference>
<reference key="18">
    <citation type="journal article" date="2019" name="Mol. Cell">
        <title>The ER-Localized Transmembrane Protein TMEM39A/SUSR2 Regulates Autophagy by Controlling the Trafficking of the PtdIns(4)P Phosphatase SAC1.</title>
        <authorList>
            <person name="Miao G."/>
            <person name="Zhang Y."/>
            <person name="Chen D."/>
            <person name="Zhang H."/>
        </authorList>
    </citation>
    <scope>INTERACTION WITH VPS39; VPS41; VAMP8 AND SNAP29</scope>
</reference>
<reference key="19">
    <citation type="journal article" date="2019" name="Mol. Cell">
        <title>Pacer is a mediator of mTORC1 and GSK3-TIP60 signaling in regulation of autophagosome maturation and lipid metabolism.</title>
        <authorList>
            <person name="Cheng X."/>
            <person name="Ma X."/>
            <person name="Zhu Q."/>
            <person name="Song D."/>
            <person name="Ding X."/>
            <person name="Li L."/>
            <person name="Jiang X."/>
            <person name="Wang X."/>
            <person name="Tian R."/>
            <person name="Su H."/>
            <person name="Shen Z."/>
            <person name="Chen S."/>
            <person name="Liu T."/>
            <person name="Gong W."/>
            <person name="Liu W."/>
            <person name="Sun Q."/>
        </authorList>
    </citation>
    <scope>INTERACTION WITH RUBCNL/PACER</scope>
</reference>
<reference key="20">
    <citation type="journal article" date="2020" name="Dev. Cell">
        <title>ORF3a of the COVID-19 virus SARS-CoV-2 blocks HOPS complex-mediated assembly of the SNARE complex required for autolysosome formation.</title>
        <authorList>
            <person name="Miao G."/>
            <person name="Zhao H."/>
            <person name="Li Y."/>
            <person name="Ji M."/>
            <person name="Chen Y."/>
            <person name="Shi Y."/>
            <person name="Bi Y."/>
            <person name="Wang P."/>
            <person name="Zhang H."/>
        </authorList>
    </citation>
    <scope>INTERACTION WITH VAMP8; SNAP29 AND VPS41</scope>
</reference>
<reference key="21">
    <citation type="journal article" date="2020" name="Cell Death Dis.">
        <title>RNF115 deletion inhibits autophagosome maturation and growth of gastric cancer.</title>
        <authorList>
            <person name="Li R."/>
            <person name="Gu Z."/>
            <person name="Zhang X."/>
            <person name="Yu J."/>
            <person name="Feng J."/>
            <person name="Lou Y."/>
            <person name="Lv P."/>
            <person name="Chen Y."/>
        </authorList>
    </citation>
    <scope>INTERACTION WITH RNF115</scope>
</reference>
<reference key="22">
    <citation type="journal article" date="2023" name="Cell Rep.">
        <title>MARCH7-mediated ubiquitination decreases the solubility of ATG14 to inhibit autophagy.</title>
        <authorList>
            <person name="Shi X."/>
            <person name="Wu W."/>
            <person name="Feng Z."/>
            <person name="Fan P."/>
            <person name="Shi R."/>
            <person name="Zhang X."/>
        </authorList>
    </citation>
    <scope>INTERACTION WITH ATG14</scope>
</reference>
<reference key="23">
    <citation type="journal article" date="2023" name="Nat. Commun.">
        <title>C9orf72-catalyzed GTP loading of Rab39A enables HOPS-mediated membrane tethering and fusion in mammalian autophagy.</title>
        <authorList>
            <person name="Zhang S."/>
            <person name="Tong M."/>
            <person name="Zheng D."/>
            <person name="Huang H."/>
            <person name="Li L."/>
            <person name="Ungermann C."/>
            <person name="Pan Y."/>
            <person name="Luo H."/>
            <person name="Lei M."/>
            <person name="Tang Z."/>
            <person name="Fu W."/>
            <person name="Chen S."/>
            <person name="Liu X."/>
            <person name="Zhong Q."/>
        </authorList>
    </citation>
    <scope>INTERACTION WITH SNAP29; VAMP8 AND RAB39A</scope>
    <scope>SUBCELLULAR LOCATION</scope>
</reference>
<reference key="24">
    <citation type="journal article" date="2015" name="Nature">
        <title>ATG14 promotes membrane tethering and fusion of autophagosomes to endolysosomes.</title>
        <authorList>
            <person name="Diao J."/>
            <person name="Liu R."/>
            <person name="Rong Y."/>
            <person name="Zhao M."/>
            <person name="Zhang J."/>
            <person name="Lai Y."/>
            <person name="Zhou Q."/>
            <person name="Wilz L.M."/>
            <person name="Li J."/>
            <person name="Vivona S."/>
            <person name="Pfuetzner R.A."/>
            <person name="Brunger A.T."/>
            <person name="Zhong Q."/>
        </authorList>
    </citation>
    <scope>X-RAY CRYSTALLOGRAPHY (1.4 ANGSTROMS) OF 170-227 IN COMPLEX WITH SNAP29 AND VAMP8</scope>
    <scope>INTERACTION WITH ATG14</scope>
    <scope>SUBCELLULAR LOCATION</scope>
    <scope>FUNCTION</scope>
</reference>
<keyword id="KW-0002">3D-structure</keyword>
<keyword id="KW-0007">Acetylation</keyword>
<keyword id="KW-0072">Autophagy</keyword>
<keyword id="KW-0175">Coiled coil</keyword>
<keyword id="KW-0963">Cytoplasm</keyword>
<keyword id="KW-0968">Cytoplasmic vesicle</keyword>
<keyword id="KW-0256">Endoplasmic reticulum</keyword>
<keyword id="KW-0931">ER-Golgi transport</keyword>
<keyword id="KW-0945">Host-virus interaction</keyword>
<keyword id="KW-0458">Lysosome</keyword>
<keyword id="KW-0472">Membrane</keyword>
<keyword id="KW-0496">Mitochondrion</keyword>
<keyword id="KW-0597">Phosphoprotein</keyword>
<keyword id="KW-1267">Proteomics identification</keyword>
<keyword id="KW-1185">Reference proteome</keyword>
<keyword id="KW-0812">Transmembrane</keyword>
<keyword id="KW-1133">Transmembrane helix</keyword>
<keyword id="KW-0813">Transport</keyword>
<name>STX17_HUMAN</name>
<accession>P56962</accession>
<accession>Q4VXC2</accession>
<comment type="function">
    <text evidence="4 6 7 9 10">SNAREs, soluble N-ethylmaleimide-sensitive factor-attachment protein receptors, are essential proteins for fusion of cellular membranes. SNAREs localized on opposing membranes assemble to form a trans-SNARE complex, an extended, parallel four alpha-helical bundle that drives membrane fusion (PubMed:23217709, PubMed:25686604, PubMed:28306502). STX17 is a SNARE of the autophagosome involved in autophagy through the direct control of autophagosome membrane fusion with the lysosome membrane (PubMed:23217709, PubMed:25686604, PubMed:28306502, PubMed:28504273). May also play a role in the early secretory pathway where it may maintain the architecture of the endoplasmic reticulum-Golgi intermediate compartment/ERGIC and Golgi and/or regulate transport between the endoplasmic reticulum, the ERGIC and the Golgi (PubMed:21545355).</text>
</comment>
<comment type="subunit">
    <text evidence="1 4 5 6 7 9 11 12 13 14 15 16 17">Forms a SNARE complex composed of VAMP8, SNAP29 and STX17 involved in fusion of autophagosome with lysosome (PubMed:23217709, PubMed:25686604, PubMed:37821429). Interacts with VAMP7 and VTI1B (PubMed:23217709). Probably interacts with BET1, SCFD1 and SEC22B (By similarity). Interacts with PTPN2 and ABL1; involved in STX17 phosphorylation (PubMed:23006999). Interacts with COPB1 (By similarity). Interacts with TMED9 and TMED10; the interaction is direct (PubMed:21545355). Interacts with ATG14 (PubMed:25686604, PubMed:37632749). Interacts with RUBCNL/PACER; promoting targeting of RUBCNL/PACER to autophagosome (PubMed:28306502, PubMed:30704899). Interacts with VAMP8, SNAP29, VPS39 and VPS41; these interactions are increased in the absence of TMEM39A (PubMed:31806350, PubMed:33422265). Interacts with IRGM; promoting STX17 recruitment to autophagosomes (PubMed:29420192). Interacts with ATG8 proteins GABARAP and MAP1LC3B (PubMed:29420192). Interacts with RNF115; this interaction enhances STX17 stability which in turn promotes autophagosome maturation (PubMed:32980859). Interacts with RAB39A (GTP-bound); the interaction promotes autophagosome-lysosome membrane fusion driven by STX17-SNAP29-VAMP8 (PubMed:37821429). Interacts with RAB39B; the interaction may promote a different fonction in autophagy as compared with RAB39A (PubMed:37821429).</text>
</comment>
<comment type="subunit">
    <text evidence="15">(Microbial infection) The interactions with VAMP8, SNAP29 and VPS41 are decreased in presence of SARS coronavirus-2/SARS-CoV-2 ORF3A protein.</text>
</comment>
<comment type="interaction">
    <interactant intactId="EBI-2797775">
        <id>P56962</id>
    </interactant>
    <interactant intactId="EBI-1190822">
        <id>O95573</id>
        <label>ACSL3</label>
    </interactant>
    <organismsDiffer>false</organismsDiffer>
    <experiments>5</experiments>
</comment>
<comment type="interaction">
    <interactant intactId="EBI-2797775">
        <id>P56962</id>
    </interactant>
    <interactant intactId="EBI-490676">
        <id>O95721</id>
        <label>SNAP29</label>
    </interactant>
    <organismsDiffer>false</organismsDiffer>
    <experiments>11</experiments>
</comment>
<comment type="interaction">
    <interactant intactId="EBI-2797775">
        <id>P56962</id>
    </interactant>
    <interactant intactId="EBI-727028">
        <id>Q9BV40</id>
        <label>VAMP8</label>
    </interactant>
    <organismsDiffer>false</organismsDiffer>
    <experiments>11</experiments>
</comment>
<comment type="interaction">
    <interactant intactId="EBI-2797775">
        <id>P56962</id>
    </interactant>
    <interactant intactId="EBI-2655929">
        <id>Q9H269</id>
        <label>VPS16</label>
    </interactant>
    <organismsDiffer>false</organismsDiffer>
    <experiments>3</experiments>
</comment>
<comment type="interaction">
    <interactant intactId="EBI-2797775">
        <id>P56962</id>
    </interactant>
    <interactant intactId="EBI-2527283">
        <id>Q96AX1</id>
        <label>VPS33A</label>
    </interactant>
    <organismsDiffer>false</organismsDiffer>
    <experiments>4</experiments>
</comment>
<comment type="interaction">
    <interactant intactId="EBI-2797775">
        <id>P56962</id>
    </interactant>
    <interactant intactId="EBI-1050197">
        <id>Q96JC1</id>
        <label>VPS39</label>
    </interactant>
    <organismsDiffer>false</organismsDiffer>
    <experiments>2</experiments>
</comment>
<comment type="interaction">
    <interactant intactId="EBI-2797775">
        <id>P56962</id>
    </interactant>
    <interactant intactId="EBI-2130459">
        <id>P49754</id>
        <label>VPS41</label>
    </interactant>
    <organismsDiffer>false</organismsDiffer>
    <experiments>2</experiments>
</comment>
<comment type="interaction">
    <interactant intactId="EBI-2797775">
        <id>P56962</id>
    </interactant>
    <interactant intactId="EBI-6555653">
        <id>P70280</id>
        <label>Vamp7</label>
    </interactant>
    <organismsDiffer>true</organismsDiffer>
    <experiments>2</experiments>
</comment>
<comment type="subcellular location">
    <subcellularLocation>
        <location evidence="5">Endoplasmic reticulum membrane</location>
        <topology evidence="2">Multi-pass membrane protein</topology>
    </subcellularLocation>
    <subcellularLocation>
        <location evidence="1">Smooth endoplasmic reticulum membrane</location>
        <topology evidence="2">Multi-pass membrane protein</topology>
    </subcellularLocation>
    <subcellularLocation>
        <location evidence="5">Endoplasmic reticulum-Golgi intermediate compartment membrane</location>
        <topology evidence="2">Multi-pass membrane protein</topology>
    </subcellularLocation>
    <subcellularLocation>
        <location evidence="6 7 8 9 11">Cytoplasmic vesicle</location>
        <location evidence="6 7 8 9 11">Autophagosome membrane</location>
        <topology evidence="2">Multi-pass membrane protein</topology>
    </subcellularLocation>
    <subcellularLocation>
        <location evidence="1">Cytoplasmic vesicle</location>
        <location evidence="1">COPII-coated vesicle membrane</location>
        <topology evidence="2">Multi-pass membrane protein</topology>
    </subcellularLocation>
    <subcellularLocation>
        <location evidence="1">Cytoplasm</location>
        <location evidence="1">Cytosol</location>
    </subcellularLocation>
    <subcellularLocation>
        <location evidence="6 10">Mitochondrion membrane</location>
        <topology evidence="2">Multi-pass membrane protein</topology>
    </subcellularLocation>
    <subcellularLocation>
        <location evidence="17">Autolysosome membrane</location>
        <topology evidence="2">Multi-pass membrane protein</topology>
    </subcellularLocation>
    <text evidence="6 17">Has a hairpin-like insertion into membranes. Localizes to the completed autophagosome membrane upon cell starvation (PubMed:23217709). Colocalized with RAB39A and RAB39B in autolysosomes in autophagy-induced conditions (PubMed:37821429).</text>
</comment>
<comment type="PTM">
    <text evidence="1">Phosphorylated at Tyr-157 probably by ABL1. Dephosphorylation by PTPN2; regulates exit from the endoplasmic reticulum (By similarity).</text>
</comment>
<comment type="PTM">
    <text evidence="10">(Microbial infection) Cleaved by the L.pneumophila serine protease Lpg1137, impairing endoplasmic reticulum-mitochondria communication, leading to inhibit autophagy.</text>
</comment>
<comment type="similarity">
    <text evidence="19">Belongs to the syntaxin family.</text>
</comment>
<evidence type="ECO:0000250" key="1">
    <source>
        <dbReference type="UniProtKB" id="Q9Z158"/>
    </source>
</evidence>
<evidence type="ECO:0000255" key="2"/>
<evidence type="ECO:0000255" key="3">
    <source>
        <dbReference type="PROSITE-ProRule" id="PRU00202"/>
    </source>
</evidence>
<evidence type="ECO:0000269" key="4">
    <source>
    </source>
</evidence>
<evidence type="ECO:0000269" key="5">
    <source>
    </source>
</evidence>
<evidence type="ECO:0000269" key="6">
    <source>
    </source>
</evidence>
<evidence type="ECO:0000269" key="7">
    <source>
    </source>
</evidence>
<evidence type="ECO:0000269" key="8">
    <source>
    </source>
</evidence>
<evidence type="ECO:0000269" key="9">
    <source>
    </source>
</evidence>
<evidence type="ECO:0000269" key="10">
    <source>
    </source>
</evidence>
<evidence type="ECO:0000269" key="11">
    <source>
    </source>
</evidence>
<evidence type="ECO:0000269" key="12">
    <source>
    </source>
</evidence>
<evidence type="ECO:0000269" key="13">
    <source>
    </source>
</evidence>
<evidence type="ECO:0000269" key="14">
    <source>
    </source>
</evidence>
<evidence type="ECO:0000269" key="15">
    <source>
    </source>
</evidence>
<evidence type="ECO:0000269" key="16">
    <source>
    </source>
</evidence>
<evidence type="ECO:0000269" key="17">
    <source>
    </source>
</evidence>
<evidence type="ECO:0000303" key="18">
    <source>
    </source>
</evidence>
<evidence type="ECO:0000305" key="19"/>
<evidence type="ECO:0000312" key="20">
    <source>
        <dbReference type="HGNC" id="HGNC:11432"/>
    </source>
</evidence>
<evidence type="ECO:0007744" key="21">
    <source>
    </source>
</evidence>
<evidence type="ECO:0007744" key="22">
    <source>
    </source>
</evidence>
<evidence type="ECO:0007744" key="23">
    <source>
    </source>
</evidence>
<evidence type="ECO:0007829" key="24">
    <source>
        <dbReference type="PDB" id="4WY4"/>
    </source>
</evidence>